<gene>
    <name type="primary">ATG9</name>
    <name type="ordered locus">CNBD0770</name>
</gene>
<accession>P0CM41</accession>
<accession>Q55UN1</accession>
<accession>Q5KHR3</accession>
<sequence>MGKGEGYLDPTILSVASGSRNSGKGKERTRRKGGHKYHSLHVQDEEEEEPPESDALRTRGKVGLNAYEKALWKWVNVDDLDGFLQEVYDYYKGKGIYCIVLARVLNLLTTFFVIAFSTFLISCIDYSKLFSSISTAEAVGRLEDVLVAQCITKFVHFKLYILNKTNSSAYDYRGSFAHTLFLIILSAFFIFQVASFAMSVPRLLDMYRFYTHLLGVPDADIQTLPWPEIVRLIGDIRKHNPVTSLSNGQATALADMVGNDAKAPAKKLDAHDIANRILRQENYLIALFNKDLLDLRVRIPVPHVLTAFIPSSILISSADAPLPSLQSEPERKFLSFGANHLTKALEWNLRFCLLGYLFDRRGQVRKEFVREKRRKDLVQGLRRRFIFMGILNAIFAPFIILYLLIYSFFRYFEWKFREFNELPHLFERRLDRSYEIAKEYVDQFPKERTALVMRFVAFIAGSFAAVLLVASLIDPDLFLHFEITPHRTVLFYLGVFGSILAISRGMVPQENMVFDPEASLNEVVRWTHYLPVEWRGQLHSQMVHQEFSKLFALKIMIFFSELLSVILTPFILFFSLPPCAAAIIDFFREFTVHVDGVGYVCSFAVFDFARYGNVDANQPETGLEGATGPDGGPAADGFAAGKPSRPTTRRTTSSSPSRLKHRDWRGNENKMEQSFLHFKATHPDWQPSDPSSSLFLDRLMGAGTRNRHGGGPVSAATGGISGSIYGGGGGGVGGRGLGVDGSVMAEMEEERLRAKRQSYERAWAKSSHLHRPDSSHSHPLRHPHSAASEIIEEEEGGEGDKGDDSIDGWSKRVKTDGETDDEEERERLWKDEGVIIIFFLTNNHITVVVMNVCRCIFRVAADEHKTAGRINKSQTRRLT</sequence>
<organism>
    <name type="scientific">Cryptococcus neoformans var. neoformans serotype D (strain B-3501A)</name>
    <name type="common">Filobasidiella neoformans</name>
    <dbReference type="NCBI Taxonomy" id="283643"/>
    <lineage>
        <taxon>Eukaryota</taxon>
        <taxon>Fungi</taxon>
        <taxon>Dikarya</taxon>
        <taxon>Basidiomycota</taxon>
        <taxon>Agaricomycotina</taxon>
        <taxon>Tremellomycetes</taxon>
        <taxon>Tremellales</taxon>
        <taxon>Cryptococcaceae</taxon>
        <taxon>Cryptococcus</taxon>
        <taxon>Cryptococcus neoformans species complex</taxon>
    </lineage>
</organism>
<proteinExistence type="inferred from homology"/>
<keyword id="KW-0072">Autophagy</keyword>
<keyword id="KW-0968">Cytoplasmic vesicle</keyword>
<keyword id="KW-0256">Endoplasmic reticulum</keyword>
<keyword id="KW-0325">Glycoprotein</keyword>
<keyword id="KW-0333">Golgi apparatus</keyword>
<keyword id="KW-0445">Lipid transport</keyword>
<keyword id="KW-0472">Membrane</keyword>
<keyword id="KW-0597">Phosphoprotein</keyword>
<keyword id="KW-0812">Transmembrane</keyword>
<keyword id="KW-1133">Transmembrane helix</keyword>
<keyword id="KW-0813">Transport</keyword>
<reference key="1">
    <citation type="journal article" date="2005" name="Science">
        <title>The genome of the basidiomycetous yeast and human pathogen Cryptococcus neoformans.</title>
        <authorList>
            <person name="Loftus B.J."/>
            <person name="Fung E."/>
            <person name="Roncaglia P."/>
            <person name="Rowley D."/>
            <person name="Amedeo P."/>
            <person name="Bruno D."/>
            <person name="Vamathevan J."/>
            <person name="Miranda M."/>
            <person name="Anderson I.J."/>
            <person name="Fraser J.A."/>
            <person name="Allen J.E."/>
            <person name="Bosdet I.E."/>
            <person name="Brent M.R."/>
            <person name="Chiu R."/>
            <person name="Doering T.L."/>
            <person name="Donlin M.J."/>
            <person name="D'Souza C.A."/>
            <person name="Fox D.S."/>
            <person name="Grinberg V."/>
            <person name="Fu J."/>
            <person name="Fukushima M."/>
            <person name="Haas B.J."/>
            <person name="Huang J.C."/>
            <person name="Janbon G."/>
            <person name="Jones S.J.M."/>
            <person name="Koo H.L."/>
            <person name="Krzywinski M.I."/>
            <person name="Kwon-Chung K.J."/>
            <person name="Lengeler K.B."/>
            <person name="Maiti R."/>
            <person name="Marra M.A."/>
            <person name="Marra R.E."/>
            <person name="Mathewson C.A."/>
            <person name="Mitchell T.G."/>
            <person name="Pertea M."/>
            <person name="Riggs F.R."/>
            <person name="Salzberg S.L."/>
            <person name="Schein J.E."/>
            <person name="Shvartsbeyn A."/>
            <person name="Shin H."/>
            <person name="Shumway M."/>
            <person name="Specht C.A."/>
            <person name="Suh B.B."/>
            <person name="Tenney A."/>
            <person name="Utterback T.R."/>
            <person name="Wickes B.L."/>
            <person name="Wortman J.R."/>
            <person name="Wye N.H."/>
            <person name="Kronstad J.W."/>
            <person name="Lodge J.K."/>
            <person name="Heitman J."/>
            <person name="Davis R.W."/>
            <person name="Fraser C.M."/>
            <person name="Hyman R.W."/>
        </authorList>
    </citation>
    <scope>NUCLEOTIDE SEQUENCE [LARGE SCALE GENOMIC DNA]</scope>
    <source>
        <strain>B-3501A</strain>
    </source>
</reference>
<name>ATG9_CRYNB</name>
<evidence type="ECO:0000250" key="1">
    <source>
        <dbReference type="UniProtKB" id="O74312"/>
    </source>
</evidence>
<evidence type="ECO:0000250" key="2">
    <source>
        <dbReference type="UniProtKB" id="Q12142"/>
    </source>
</evidence>
<evidence type="ECO:0000255" key="3"/>
<evidence type="ECO:0000256" key="4">
    <source>
        <dbReference type="SAM" id="MobiDB-lite"/>
    </source>
</evidence>
<evidence type="ECO:0000305" key="5"/>
<dbReference type="EMBL" id="AAEY01000019">
    <property type="protein sequence ID" value="EAL21381.1"/>
    <property type="status" value="ALT_SEQ"/>
    <property type="molecule type" value="Genomic_DNA"/>
</dbReference>
<dbReference type="RefSeq" id="XP_776028.1">
    <property type="nucleotide sequence ID" value="XM_770935.1"/>
</dbReference>
<dbReference type="SMR" id="P0CM41"/>
<dbReference type="GlyCosmos" id="P0CM41">
    <property type="glycosylation" value="2 sites, No reported glycans"/>
</dbReference>
<dbReference type="GeneID" id="4935466"/>
<dbReference type="KEGG" id="cnb:CNBD0770"/>
<dbReference type="HOGENOM" id="CLU_006200_3_0_1"/>
<dbReference type="OrthoDB" id="6310at5206"/>
<dbReference type="GO" id="GO:0005776">
    <property type="term" value="C:autophagosome"/>
    <property type="evidence" value="ECO:0007669"/>
    <property type="project" value="TreeGrafter"/>
</dbReference>
<dbReference type="GO" id="GO:0030659">
    <property type="term" value="C:cytoplasmic vesicle membrane"/>
    <property type="evidence" value="ECO:0007669"/>
    <property type="project" value="UniProtKB-SubCell"/>
</dbReference>
<dbReference type="GO" id="GO:0005789">
    <property type="term" value="C:endoplasmic reticulum membrane"/>
    <property type="evidence" value="ECO:0007669"/>
    <property type="project" value="UniProtKB-SubCell"/>
</dbReference>
<dbReference type="GO" id="GO:0000139">
    <property type="term" value="C:Golgi membrane"/>
    <property type="evidence" value="ECO:0007669"/>
    <property type="project" value="UniProtKB-SubCell"/>
</dbReference>
<dbReference type="GO" id="GO:0034045">
    <property type="term" value="C:phagophore assembly site membrane"/>
    <property type="evidence" value="ECO:0007669"/>
    <property type="project" value="UniProtKB-SubCell"/>
</dbReference>
<dbReference type="GO" id="GO:0000422">
    <property type="term" value="P:autophagy of mitochondrion"/>
    <property type="evidence" value="ECO:0007669"/>
    <property type="project" value="TreeGrafter"/>
</dbReference>
<dbReference type="GO" id="GO:0006869">
    <property type="term" value="P:lipid transport"/>
    <property type="evidence" value="ECO:0007669"/>
    <property type="project" value="UniProtKB-KW"/>
</dbReference>
<dbReference type="GO" id="GO:0034727">
    <property type="term" value="P:piecemeal microautophagy of the nucleus"/>
    <property type="evidence" value="ECO:0007669"/>
    <property type="project" value="TreeGrafter"/>
</dbReference>
<dbReference type="GO" id="GO:0034497">
    <property type="term" value="P:protein localization to phagophore assembly site"/>
    <property type="evidence" value="ECO:0007669"/>
    <property type="project" value="TreeGrafter"/>
</dbReference>
<dbReference type="GO" id="GO:0061709">
    <property type="term" value="P:reticulophagy"/>
    <property type="evidence" value="ECO:0007669"/>
    <property type="project" value="TreeGrafter"/>
</dbReference>
<dbReference type="InterPro" id="IPR007241">
    <property type="entry name" value="Autophagy-rel_prot_9"/>
</dbReference>
<dbReference type="PANTHER" id="PTHR13038">
    <property type="entry name" value="APG9 AUTOPHAGY 9"/>
    <property type="match status" value="1"/>
</dbReference>
<dbReference type="PANTHER" id="PTHR13038:SF10">
    <property type="entry name" value="AUTOPHAGY-RELATED PROTEIN 9"/>
    <property type="match status" value="1"/>
</dbReference>
<dbReference type="Pfam" id="PF04109">
    <property type="entry name" value="ATG9"/>
    <property type="match status" value="1"/>
</dbReference>
<protein>
    <recommendedName>
        <fullName>Autophagy-related protein 9</fullName>
    </recommendedName>
</protein>
<comment type="function">
    <text evidence="2">Phospholipid scramblase involved in autophagy and cytoplasm to vacuole transport (Cvt) vesicle formation. Cycles between the preautophagosomal structure/phagophore assembly site (PAS) and the cytoplasmic vesicle pool and supplies membrane for the growing autophagosome. Lipid scramblase activity plays a key role in preautophagosomal structure/phagophore assembly by distributing the phospholipids that arrive through ATG2 from the cytoplasmic to the luminal leaflet of the bilayer, thereby driving autophagosomal membrane expansion. Required for mitophagy. Also involved in endoplasmic reticulum-specific autophagic process and is essential for the survival of cells subjected to severe ER stress. Different machineries are required for anterograde trafficking to the PAS during either the Cvt pathway or bulk autophagy and for retrograde trafficking.</text>
</comment>
<comment type="catalytic activity">
    <reaction evidence="2">
        <text>a 1,2-diacyl-sn-glycero-3-phosphocholine(in) = a 1,2-diacyl-sn-glycero-3-phosphocholine(out)</text>
        <dbReference type="Rhea" id="RHEA:38571"/>
        <dbReference type="ChEBI" id="CHEBI:57643"/>
    </reaction>
</comment>
<comment type="catalytic activity">
    <reaction evidence="2">
        <text>a 1,2-diacyl-sn-glycero-3-phospho-L-serine(in) = a 1,2-diacyl-sn-glycero-3-phospho-L-serine(out)</text>
        <dbReference type="Rhea" id="RHEA:38663"/>
        <dbReference type="ChEBI" id="CHEBI:57262"/>
    </reaction>
</comment>
<comment type="catalytic activity">
    <reaction evidence="2">
        <text>a 1,2-diacyl-sn-glycero-3-phosphoethanolamine(in) = a 1,2-diacyl-sn-glycero-3-phosphoethanolamine(out)</text>
        <dbReference type="Rhea" id="RHEA:38895"/>
        <dbReference type="ChEBI" id="CHEBI:64612"/>
    </reaction>
</comment>
<comment type="catalytic activity">
    <reaction evidence="2">
        <text>a 1,2-diacyl-sn-glycero-3-phospho-(1D-myo-inositol-3-phosphate)(in) = a 1,2-diacyl-sn-glycero-3-phospho-(1D-myo-inositol-3-phosphate)(out)</text>
        <dbReference type="Rhea" id="RHEA:67920"/>
        <dbReference type="ChEBI" id="CHEBI:58088"/>
    </reaction>
</comment>
<comment type="subunit">
    <text evidence="1">Homotrimer; forms a homotrimer with a central pore that forms a path between the two membrane leaflets.</text>
</comment>
<comment type="subcellular location">
    <subcellularLocation>
        <location evidence="2">Preautophagosomal structure membrane</location>
        <topology evidence="2">Multi-pass membrane protein</topology>
    </subcellularLocation>
    <subcellularLocation>
        <location evidence="2">Cytoplasmic vesicle membrane</location>
        <topology evidence="2">Multi-pass membrane protein</topology>
    </subcellularLocation>
    <subcellularLocation>
        <location evidence="2">Golgi apparatus membrane</location>
        <topology evidence="2">Multi-pass membrane protein</topology>
    </subcellularLocation>
    <subcellularLocation>
        <location evidence="2">Endoplasmic reticulum membrane</location>
        <topology evidence="2">Multi-pass membrane protein</topology>
    </subcellularLocation>
</comment>
<comment type="domain">
    <text evidence="1">Forms a homotrimer with a solvated central pore, which is connected laterally to the cytosol through the cavity within each protomer. Acts as a lipid scramblase that uses its central pore to function: the central pore opens laterally to accommodate lipid headgroups, thereby enabling lipid flipping and redistribution of lipids added to the outer leaflet of ATG9-containing vesicles, thereby enabling growth into autophagosomes.</text>
</comment>
<comment type="PTM">
    <text evidence="2">Phosphorylated by ATG1. ATG1 phosphorylation is required for preautophagosome elongation.</text>
</comment>
<comment type="similarity">
    <text evidence="5">Belongs to the ATG9 family.</text>
</comment>
<comment type="sequence caution" evidence="5">
    <conflict type="erroneous gene model prediction">
        <sequence resource="EMBL-CDS" id="EAL21381"/>
    </conflict>
</comment>
<feature type="chain" id="PRO_0000410022" description="Autophagy-related protein 9">
    <location>
        <begin position="1"/>
        <end position="879"/>
    </location>
</feature>
<feature type="transmembrane region" description="Helical" evidence="3">
    <location>
        <begin position="104"/>
        <end position="124"/>
    </location>
</feature>
<feature type="transmembrane region" description="Helical" evidence="3">
    <location>
        <begin position="180"/>
        <end position="200"/>
    </location>
</feature>
<feature type="intramembrane region" evidence="1">
    <location>
        <begin position="385"/>
        <end position="405"/>
    </location>
</feature>
<feature type="transmembrane region" description="Helical" evidence="3">
    <location>
        <begin position="455"/>
        <end position="475"/>
    </location>
</feature>
<feature type="transmembrane region" description="Helical" evidence="3">
    <location>
        <begin position="488"/>
        <end position="508"/>
    </location>
</feature>
<feature type="intramembrane region" evidence="1">
    <location>
        <begin position="555"/>
        <end position="575"/>
    </location>
</feature>
<feature type="region of interest" description="Disordered" evidence="4">
    <location>
        <begin position="1"/>
        <end position="56"/>
    </location>
</feature>
<feature type="region of interest" description="Disordered" evidence="4">
    <location>
        <begin position="620"/>
        <end position="666"/>
    </location>
</feature>
<feature type="region of interest" description="Disordered" evidence="4">
    <location>
        <begin position="763"/>
        <end position="825"/>
    </location>
</feature>
<feature type="compositionally biased region" description="Basic residues" evidence="4">
    <location>
        <begin position="27"/>
        <end position="39"/>
    </location>
</feature>
<feature type="compositionally biased region" description="Low complexity" evidence="4">
    <location>
        <begin position="632"/>
        <end position="657"/>
    </location>
</feature>
<feature type="compositionally biased region" description="Basic and acidic residues" evidence="4">
    <location>
        <begin position="798"/>
        <end position="817"/>
    </location>
</feature>
<feature type="glycosylation site" description="N-linked (GlcNAc...) asparagine" evidence="3">
    <location>
        <position position="163"/>
    </location>
</feature>
<feature type="glycosylation site" description="N-linked (GlcNAc...) asparagine" evidence="3">
    <location>
        <position position="166"/>
    </location>
</feature>